<accession>Q752I1</accession>
<comment type="function">
    <text evidence="1">Probable transporter.</text>
</comment>
<comment type="subcellular location">
    <subcellularLocation>
        <location evidence="1">Vacuole membrane</location>
        <topology evidence="1">Multi-pass membrane protein</topology>
    </subcellularLocation>
</comment>
<comment type="similarity">
    <text evidence="3">Belongs to the major facilitator superfamily.</text>
</comment>
<organism>
    <name type="scientific">Eremothecium gossypii (strain ATCC 10895 / CBS 109.51 / FGSC 9923 / NRRL Y-1056)</name>
    <name type="common">Yeast</name>
    <name type="synonym">Ashbya gossypii</name>
    <dbReference type="NCBI Taxonomy" id="284811"/>
    <lineage>
        <taxon>Eukaryota</taxon>
        <taxon>Fungi</taxon>
        <taxon>Dikarya</taxon>
        <taxon>Ascomycota</taxon>
        <taxon>Saccharomycotina</taxon>
        <taxon>Saccharomycetes</taxon>
        <taxon>Saccharomycetales</taxon>
        <taxon>Saccharomycetaceae</taxon>
        <taxon>Eremothecium</taxon>
    </lineage>
</organism>
<name>MCH1_EREGS</name>
<proteinExistence type="inferred from homology"/>
<keyword id="KW-0472">Membrane</keyword>
<keyword id="KW-1185">Reference proteome</keyword>
<keyword id="KW-0812">Transmembrane</keyword>
<keyword id="KW-1133">Transmembrane helix</keyword>
<keyword id="KW-0813">Transport</keyword>
<keyword id="KW-0926">Vacuole</keyword>
<gene>
    <name type="primary">MCH1</name>
    <name type="ordered locus">AFR595W</name>
</gene>
<evidence type="ECO:0000250" key="1"/>
<evidence type="ECO:0000255" key="2"/>
<evidence type="ECO:0000305" key="3"/>
<dbReference type="EMBL" id="AE016819">
    <property type="protein sequence ID" value="AAS53966.1"/>
    <property type="molecule type" value="Genomic_DNA"/>
</dbReference>
<dbReference type="RefSeq" id="NP_986142.1">
    <property type="nucleotide sequence ID" value="NM_212278.1"/>
</dbReference>
<dbReference type="SMR" id="Q752I1"/>
<dbReference type="FunCoup" id="Q752I1">
    <property type="interactions" value="32"/>
</dbReference>
<dbReference type="EnsemblFungi" id="AAS53966">
    <property type="protein sequence ID" value="AAS53966"/>
    <property type="gene ID" value="AGOS_AFR595W"/>
</dbReference>
<dbReference type="GeneID" id="4622425"/>
<dbReference type="KEGG" id="ago:AGOS_AFR595W"/>
<dbReference type="eggNOG" id="ENOG502QTNE">
    <property type="taxonomic scope" value="Eukaryota"/>
</dbReference>
<dbReference type="HOGENOM" id="CLU_012596_3_0_1"/>
<dbReference type="InParanoid" id="Q752I1"/>
<dbReference type="OMA" id="PTMWWLA"/>
<dbReference type="OrthoDB" id="199930at2759"/>
<dbReference type="Proteomes" id="UP000000591">
    <property type="component" value="Chromosome VI"/>
</dbReference>
<dbReference type="GO" id="GO:0000329">
    <property type="term" value="C:fungal-type vacuole membrane"/>
    <property type="evidence" value="ECO:0000318"/>
    <property type="project" value="GO_Central"/>
</dbReference>
<dbReference type="CDD" id="cd17354">
    <property type="entry name" value="MFS_Mch1p_like"/>
    <property type="match status" value="1"/>
</dbReference>
<dbReference type="Gene3D" id="1.20.1250.20">
    <property type="entry name" value="MFS general substrate transporter like domains"/>
    <property type="match status" value="1"/>
</dbReference>
<dbReference type="InterPro" id="IPR036259">
    <property type="entry name" value="MFS_trans_sf"/>
</dbReference>
<dbReference type="PANTHER" id="PTHR21576:SF45">
    <property type="entry name" value="TRANSPORTER MCH1-RELATED"/>
    <property type="match status" value="1"/>
</dbReference>
<dbReference type="PANTHER" id="PTHR21576">
    <property type="entry name" value="UNCHARACTERIZED NODULIN-LIKE PROTEIN"/>
    <property type="match status" value="1"/>
</dbReference>
<dbReference type="SUPFAM" id="SSF103473">
    <property type="entry name" value="MFS general substrate transporter"/>
    <property type="match status" value="1"/>
</dbReference>
<sequence>MSLSSLEHKLTYHVRNWLHGSGFAWNTLHMSAFLVALCACIPAGFISQISLYSEPWREHLGYSVVEVNVLFSAVNLGGYITPPLLGLLSDAHGPVMLSWLSFVGFVPTYAYAAWVFASGEPHFYASVLCFTLIGISTNALYFSALFTASKLYPASKLCSISLPATFYGMASVLGSQLLKIPWFRNGLPYLDLSRVFRTLAVAYTLISFCMWFATSIVTMLKVKAATLTFAGMQSPTEPLLPQDIRRRLRNFFHDPAAYFMALVLLLSLGPMEMFLTNMGSLSSLLGQASVLPEFAIASTCSRFLSGLIIDLCIHNGVSTMSVQWAVLLLGVVGQWIVVLATRASDGPLLSLASALSGACYGGLFTVSPILTLAVWGDAVFGTAYGSFMITPAVGSILFGLTYAHIFDANCTPSGVLPVCIQHVFWSSTSALAIALLFSVLMYLVFWRRKV</sequence>
<reference key="1">
    <citation type="journal article" date="2004" name="Science">
        <title>The Ashbya gossypii genome as a tool for mapping the ancient Saccharomyces cerevisiae genome.</title>
        <authorList>
            <person name="Dietrich F.S."/>
            <person name="Voegeli S."/>
            <person name="Brachat S."/>
            <person name="Lerch A."/>
            <person name="Gates K."/>
            <person name="Steiner S."/>
            <person name="Mohr C."/>
            <person name="Poehlmann R."/>
            <person name="Luedi P."/>
            <person name="Choi S."/>
            <person name="Wing R.A."/>
            <person name="Flavier A."/>
            <person name="Gaffney T.D."/>
            <person name="Philippsen P."/>
        </authorList>
    </citation>
    <scope>NUCLEOTIDE SEQUENCE [LARGE SCALE GENOMIC DNA]</scope>
    <source>
        <strain>ATCC 10895 / CBS 109.51 / FGSC 9923 / NRRL Y-1056</strain>
    </source>
</reference>
<reference key="2">
    <citation type="journal article" date="2013" name="G3 (Bethesda)">
        <title>Genomes of Ashbya fungi isolated from insects reveal four mating-type loci, numerous translocations, lack of transposons, and distinct gene duplications.</title>
        <authorList>
            <person name="Dietrich F.S."/>
            <person name="Voegeli S."/>
            <person name="Kuo S."/>
            <person name="Philippsen P."/>
        </authorList>
    </citation>
    <scope>GENOME REANNOTATION</scope>
    <source>
        <strain>ATCC 10895 / CBS 109.51 / FGSC 9923 / NRRL Y-1056</strain>
    </source>
</reference>
<feature type="chain" id="PRO_0000084866" description="Probable transporter MCH1">
    <location>
        <begin position="1"/>
        <end position="450"/>
    </location>
</feature>
<feature type="transmembrane region" description="Helical" evidence="2">
    <location>
        <begin position="32"/>
        <end position="52"/>
    </location>
</feature>
<feature type="transmembrane region" description="Helical" evidence="2">
    <location>
        <begin position="69"/>
        <end position="89"/>
    </location>
</feature>
<feature type="transmembrane region" description="Helical" evidence="2">
    <location>
        <begin position="96"/>
        <end position="116"/>
    </location>
</feature>
<feature type="transmembrane region" description="Helical" evidence="2">
    <location>
        <begin position="127"/>
        <end position="147"/>
    </location>
</feature>
<feature type="transmembrane region" description="Helical" evidence="2">
    <location>
        <begin position="157"/>
        <end position="177"/>
    </location>
</feature>
<feature type="transmembrane region" description="Helical" evidence="2">
    <location>
        <begin position="199"/>
        <end position="219"/>
    </location>
</feature>
<feature type="transmembrane region" description="Helical" evidence="2">
    <location>
        <begin position="255"/>
        <end position="275"/>
    </location>
</feature>
<feature type="transmembrane region" description="Helical" evidence="2">
    <location>
        <begin position="290"/>
        <end position="309"/>
    </location>
</feature>
<feature type="transmembrane region" description="Helical" evidence="2">
    <location>
        <begin position="320"/>
        <end position="340"/>
    </location>
</feature>
<feature type="transmembrane region" description="Helical" evidence="2">
    <location>
        <begin position="355"/>
        <end position="375"/>
    </location>
</feature>
<feature type="transmembrane region" description="Helical" evidence="2">
    <location>
        <begin position="378"/>
        <end position="398"/>
    </location>
</feature>
<feature type="transmembrane region" description="Helical" evidence="2">
    <location>
        <begin position="423"/>
        <end position="443"/>
    </location>
</feature>
<protein>
    <recommendedName>
        <fullName>Probable transporter MCH1</fullName>
    </recommendedName>
</protein>